<gene>
    <name evidence="1" type="primary">lpxD</name>
    <name type="ordered locus">Noc_0229</name>
</gene>
<protein>
    <recommendedName>
        <fullName evidence="1">UDP-3-O-acylglucosamine N-acyltransferase</fullName>
        <ecNumber evidence="1">2.3.1.191</ecNumber>
    </recommendedName>
</protein>
<comment type="function">
    <text evidence="1">Catalyzes the N-acylation of UDP-3-O-acylglucosamine using 3-hydroxyacyl-ACP as the acyl donor. Is involved in the biosynthesis of lipid A, a phosphorylated glycolipid that anchors the lipopolysaccharide to the outer membrane of the cell.</text>
</comment>
<comment type="catalytic activity">
    <reaction evidence="1">
        <text>a UDP-3-O-[(3R)-3-hydroxyacyl]-alpha-D-glucosamine + a (3R)-hydroxyacyl-[ACP] = a UDP-2-N,3-O-bis[(3R)-3-hydroxyacyl]-alpha-D-glucosamine + holo-[ACP] + H(+)</text>
        <dbReference type="Rhea" id="RHEA:53836"/>
        <dbReference type="Rhea" id="RHEA-COMP:9685"/>
        <dbReference type="Rhea" id="RHEA-COMP:9945"/>
        <dbReference type="ChEBI" id="CHEBI:15378"/>
        <dbReference type="ChEBI" id="CHEBI:64479"/>
        <dbReference type="ChEBI" id="CHEBI:78827"/>
        <dbReference type="ChEBI" id="CHEBI:137740"/>
        <dbReference type="ChEBI" id="CHEBI:137748"/>
        <dbReference type="EC" id="2.3.1.191"/>
    </reaction>
</comment>
<comment type="pathway">
    <text evidence="1">Bacterial outer membrane biogenesis; LPS lipid A biosynthesis.</text>
</comment>
<comment type="subunit">
    <text evidence="1">Homotrimer.</text>
</comment>
<comment type="similarity">
    <text evidence="1">Belongs to the transferase hexapeptide repeat family. LpxD subfamily.</text>
</comment>
<evidence type="ECO:0000255" key="1">
    <source>
        <dbReference type="HAMAP-Rule" id="MF_00523"/>
    </source>
</evidence>
<proteinExistence type="inferred from homology"/>
<dbReference type="EC" id="2.3.1.191" evidence="1"/>
<dbReference type="EMBL" id="CP000127">
    <property type="protein sequence ID" value="ABA56759.1"/>
    <property type="molecule type" value="Genomic_DNA"/>
</dbReference>
<dbReference type="RefSeq" id="WP_002814043.1">
    <property type="nucleotide sequence ID" value="NC_007484.1"/>
</dbReference>
<dbReference type="SMR" id="Q3JEI7"/>
<dbReference type="FunCoup" id="Q3JEI7">
    <property type="interactions" value="394"/>
</dbReference>
<dbReference type="STRING" id="323261.Noc_0229"/>
<dbReference type="KEGG" id="noc:Noc_0229"/>
<dbReference type="eggNOG" id="COG1044">
    <property type="taxonomic scope" value="Bacteria"/>
</dbReference>
<dbReference type="HOGENOM" id="CLU_049865_0_0_6"/>
<dbReference type="InParanoid" id="Q3JEI7"/>
<dbReference type="UniPathway" id="UPA00973"/>
<dbReference type="Proteomes" id="UP000006838">
    <property type="component" value="Chromosome"/>
</dbReference>
<dbReference type="GO" id="GO:0016020">
    <property type="term" value="C:membrane"/>
    <property type="evidence" value="ECO:0007669"/>
    <property type="project" value="GOC"/>
</dbReference>
<dbReference type="GO" id="GO:0016410">
    <property type="term" value="F:N-acyltransferase activity"/>
    <property type="evidence" value="ECO:0007669"/>
    <property type="project" value="InterPro"/>
</dbReference>
<dbReference type="GO" id="GO:0009245">
    <property type="term" value="P:lipid A biosynthetic process"/>
    <property type="evidence" value="ECO:0007669"/>
    <property type="project" value="UniProtKB-UniRule"/>
</dbReference>
<dbReference type="CDD" id="cd03352">
    <property type="entry name" value="LbH_LpxD"/>
    <property type="match status" value="1"/>
</dbReference>
<dbReference type="Gene3D" id="2.160.10.10">
    <property type="entry name" value="Hexapeptide repeat proteins"/>
    <property type="match status" value="1"/>
</dbReference>
<dbReference type="Gene3D" id="3.40.1390.10">
    <property type="entry name" value="MurE/MurF, N-terminal domain"/>
    <property type="match status" value="1"/>
</dbReference>
<dbReference type="HAMAP" id="MF_00523">
    <property type="entry name" value="LpxD"/>
    <property type="match status" value="1"/>
</dbReference>
<dbReference type="InterPro" id="IPR001451">
    <property type="entry name" value="Hexapep"/>
</dbReference>
<dbReference type="InterPro" id="IPR007691">
    <property type="entry name" value="LpxD"/>
</dbReference>
<dbReference type="InterPro" id="IPR011004">
    <property type="entry name" value="Trimer_LpxA-like_sf"/>
</dbReference>
<dbReference type="InterPro" id="IPR020573">
    <property type="entry name" value="UDP_GlcNAc_AcTrfase_non-rep"/>
</dbReference>
<dbReference type="NCBIfam" id="TIGR01853">
    <property type="entry name" value="lipid_A_lpxD"/>
    <property type="match status" value="1"/>
</dbReference>
<dbReference type="NCBIfam" id="NF002060">
    <property type="entry name" value="PRK00892.1"/>
    <property type="match status" value="1"/>
</dbReference>
<dbReference type="PANTHER" id="PTHR43378">
    <property type="entry name" value="UDP-3-O-ACYLGLUCOSAMINE N-ACYLTRANSFERASE"/>
    <property type="match status" value="1"/>
</dbReference>
<dbReference type="PANTHER" id="PTHR43378:SF2">
    <property type="entry name" value="UDP-3-O-ACYLGLUCOSAMINE N-ACYLTRANSFERASE 1, MITOCHONDRIAL-RELATED"/>
    <property type="match status" value="1"/>
</dbReference>
<dbReference type="Pfam" id="PF00132">
    <property type="entry name" value="Hexapep"/>
    <property type="match status" value="3"/>
</dbReference>
<dbReference type="Pfam" id="PF04613">
    <property type="entry name" value="LpxD"/>
    <property type="match status" value="1"/>
</dbReference>
<dbReference type="SUPFAM" id="SSF51161">
    <property type="entry name" value="Trimeric LpxA-like enzymes"/>
    <property type="match status" value="1"/>
</dbReference>
<dbReference type="PROSITE" id="PS00101">
    <property type="entry name" value="HEXAPEP_TRANSFERASES"/>
    <property type="match status" value="1"/>
</dbReference>
<feature type="chain" id="PRO_0000264402" description="UDP-3-O-acylglucosamine N-acyltransferase">
    <location>
        <begin position="1"/>
        <end position="347"/>
    </location>
</feature>
<feature type="active site" description="Proton acceptor" evidence="1">
    <location>
        <position position="241"/>
    </location>
</feature>
<reference key="1">
    <citation type="journal article" date="2006" name="Appl. Environ. Microbiol.">
        <title>Complete genome sequence of the marine, chemolithoautotrophic, ammonia-oxidizing bacterium Nitrosococcus oceani ATCC 19707.</title>
        <authorList>
            <person name="Klotz M.G."/>
            <person name="Arp D.J."/>
            <person name="Chain P.S.G."/>
            <person name="El-Sheikh A.F."/>
            <person name="Hauser L.J."/>
            <person name="Hommes N.G."/>
            <person name="Larimer F.W."/>
            <person name="Malfatti S.A."/>
            <person name="Norton J.M."/>
            <person name="Poret-Peterson A.T."/>
            <person name="Vergez L.M."/>
            <person name="Ward B.B."/>
        </authorList>
    </citation>
    <scope>NUCLEOTIDE SEQUENCE [LARGE SCALE GENOMIC DNA]</scope>
    <source>
        <strain>ATCC 19707 / BCRC 17464 / JCM 30415 / NCIMB 11848 / C-107</strain>
    </source>
</reference>
<sequence length="347" mass="37696">MEIRLSEIAQFLGCAIEGDGEAPIRGIAPLHQAQASELSFYTNRKYAAQARLSKAGAIIVGAKDREQFAGRRLLISDNPYRDFARVVDRWFNRSYRPAPGVHPTAIVGDDVQIAENCSIGAYCVIEDGVTIKAHTVLFPFCYVGAKTILGEHCLLYPRVTLLERVRIGHRVILHPGVVIGGDGFGFAPDPPQGYFKVPQVGWVEIADDVEVQCNTAIDRGALGPTRIGQGSKIDNLVQVGHNVEIGEHSIIVSQVGISGSSKIGNWVTLAGQVGLVGHIRIGDGAVITAQSGVAKDVPPKAIMTGSPVQPMMENRRALAELNRLRELRKKVRELERRLTVLEQVESC</sequence>
<accession>Q3JEI7</accession>
<organism>
    <name type="scientific">Nitrosococcus oceani (strain ATCC 19707 / BCRC 17464 / JCM 30415 / NCIMB 11848 / C-107)</name>
    <dbReference type="NCBI Taxonomy" id="323261"/>
    <lineage>
        <taxon>Bacteria</taxon>
        <taxon>Pseudomonadati</taxon>
        <taxon>Pseudomonadota</taxon>
        <taxon>Gammaproteobacteria</taxon>
        <taxon>Chromatiales</taxon>
        <taxon>Chromatiaceae</taxon>
        <taxon>Nitrosococcus</taxon>
    </lineage>
</organism>
<keyword id="KW-0012">Acyltransferase</keyword>
<keyword id="KW-0441">Lipid A biosynthesis</keyword>
<keyword id="KW-0444">Lipid biosynthesis</keyword>
<keyword id="KW-0443">Lipid metabolism</keyword>
<keyword id="KW-1185">Reference proteome</keyword>
<keyword id="KW-0677">Repeat</keyword>
<keyword id="KW-0808">Transferase</keyword>
<name>LPXD_NITOC</name>